<accession>Q0TB40</accession>
<gene>
    <name evidence="1" type="primary">nepI</name>
    <name type="ordered locus">ECP_3868</name>
</gene>
<keyword id="KW-0050">Antiport</keyword>
<keyword id="KW-0997">Cell inner membrane</keyword>
<keyword id="KW-1003">Cell membrane</keyword>
<keyword id="KW-0472">Membrane</keyword>
<keyword id="KW-0812">Transmembrane</keyword>
<keyword id="KW-1133">Transmembrane helix</keyword>
<keyword id="KW-0813">Transport</keyword>
<evidence type="ECO:0000255" key="1">
    <source>
        <dbReference type="HAMAP-Rule" id="MF_01189"/>
    </source>
</evidence>
<evidence type="ECO:0000305" key="2"/>
<proteinExistence type="inferred from homology"/>
<feature type="chain" id="PRO_0000294112" description="Purine ribonucleoside efflux pump NepI">
    <location>
        <begin position="1"/>
        <end position="396"/>
    </location>
</feature>
<feature type="topological domain" description="Cytoplasmic" evidence="1">
    <location>
        <begin position="1"/>
        <end position="21"/>
    </location>
</feature>
<feature type="transmembrane region" description="Helical" evidence="1">
    <location>
        <begin position="22"/>
        <end position="42"/>
    </location>
</feature>
<feature type="topological domain" description="Periplasmic" evidence="1">
    <location>
        <begin position="43"/>
        <end position="54"/>
    </location>
</feature>
<feature type="transmembrane region" description="Helical" evidence="1">
    <location>
        <begin position="55"/>
        <end position="75"/>
    </location>
</feature>
<feature type="topological domain" description="Cytoplasmic" evidence="1">
    <location>
        <begin position="76"/>
        <end position="85"/>
    </location>
</feature>
<feature type="transmembrane region" description="Helical" evidence="1">
    <location>
        <begin position="86"/>
        <end position="106"/>
    </location>
</feature>
<feature type="topological domain" description="Periplasmic" evidence="1">
    <location>
        <position position="107"/>
    </location>
</feature>
<feature type="transmembrane region" description="Helical" evidence="1">
    <location>
        <begin position="108"/>
        <end position="128"/>
    </location>
</feature>
<feature type="topological domain" description="Cytoplasmic" evidence="1">
    <location>
        <begin position="129"/>
        <end position="147"/>
    </location>
</feature>
<feature type="transmembrane region" description="Helical" evidence="1">
    <location>
        <begin position="148"/>
        <end position="168"/>
    </location>
</feature>
<feature type="topological domain" description="Periplasmic" evidence="1">
    <location>
        <begin position="169"/>
        <end position="175"/>
    </location>
</feature>
<feature type="transmembrane region" description="Helical" evidence="1">
    <location>
        <begin position="176"/>
        <end position="196"/>
    </location>
</feature>
<feature type="topological domain" description="Cytoplasmic" evidence="1">
    <location>
        <begin position="197"/>
        <end position="215"/>
    </location>
</feature>
<feature type="transmembrane region" description="Helical" evidence="1">
    <location>
        <begin position="216"/>
        <end position="236"/>
    </location>
</feature>
<feature type="topological domain" description="Periplasmic" evidence="1">
    <location>
        <begin position="237"/>
        <end position="255"/>
    </location>
</feature>
<feature type="transmembrane region" description="Helical" evidence="1">
    <location>
        <begin position="256"/>
        <end position="276"/>
    </location>
</feature>
<feature type="topological domain" description="Cytoplasmic" evidence="1">
    <location>
        <begin position="277"/>
        <end position="281"/>
    </location>
</feature>
<feature type="transmembrane region" description="Helical" evidence="1">
    <location>
        <begin position="282"/>
        <end position="302"/>
    </location>
</feature>
<feature type="topological domain" description="Periplasmic" evidence="1">
    <location>
        <begin position="303"/>
        <end position="305"/>
    </location>
</feature>
<feature type="transmembrane region" description="Helical" evidence="1">
    <location>
        <begin position="306"/>
        <end position="326"/>
    </location>
</feature>
<feature type="topological domain" description="Cytoplasmic" evidence="1">
    <location>
        <begin position="327"/>
        <end position="343"/>
    </location>
</feature>
<feature type="transmembrane region" description="Helical" evidence="1">
    <location>
        <begin position="344"/>
        <end position="364"/>
    </location>
</feature>
<feature type="topological domain" description="Periplasmic" evidence="1">
    <location>
        <begin position="365"/>
        <end position="366"/>
    </location>
</feature>
<feature type="transmembrane region" description="Helical" evidence="1">
    <location>
        <begin position="367"/>
        <end position="387"/>
    </location>
</feature>
<feature type="topological domain" description="Cytoplasmic" evidence="1">
    <location>
        <begin position="388"/>
        <end position="396"/>
    </location>
</feature>
<organism>
    <name type="scientific">Escherichia coli O6:K15:H31 (strain 536 / UPEC)</name>
    <dbReference type="NCBI Taxonomy" id="362663"/>
    <lineage>
        <taxon>Bacteria</taxon>
        <taxon>Pseudomonadati</taxon>
        <taxon>Pseudomonadota</taxon>
        <taxon>Gammaproteobacteria</taxon>
        <taxon>Enterobacterales</taxon>
        <taxon>Enterobacteriaceae</taxon>
        <taxon>Escherichia</taxon>
    </lineage>
</organism>
<comment type="function">
    <text evidence="1">Involved in the efflux of purine ribonucleosides, such as inosine and guanosine.</text>
</comment>
<comment type="catalytic activity">
    <reaction evidence="1">
        <text>inosine(in) + H(+)(out) = inosine(out) + H(+)(in)</text>
        <dbReference type="Rhea" id="RHEA:29211"/>
        <dbReference type="ChEBI" id="CHEBI:15378"/>
        <dbReference type="ChEBI" id="CHEBI:17596"/>
    </reaction>
    <physiologicalReaction direction="left-to-right" evidence="1">
        <dbReference type="Rhea" id="RHEA:29212"/>
    </physiologicalReaction>
</comment>
<comment type="catalytic activity">
    <reaction evidence="1">
        <text>guanosine(in) + H(+)(out) = guanosine(out) + H(+)(in)</text>
        <dbReference type="Rhea" id="RHEA:29583"/>
        <dbReference type="ChEBI" id="CHEBI:15378"/>
        <dbReference type="ChEBI" id="CHEBI:16750"/>
    </reaction>
    <physiologicalReaction direction="left-to-right" evidence="1">
        <dbReference type="Rhea" id="RHEA:29584"/>
    </physiologicalReaction>
</comment>
<comment type="subcellular location">
    <subcellularLocation>
        <location evidence="1">Cell inner membrane</location>
        <topology evidence="1">Multi-pass membrane protein</topology>
    </subcellularLocation>
</comment>
<comment type="similarity">
    <text evidence="1">Belongs to the major facilitator superfamily. DHA1 family. NepI (TC 2.A.1.2.26) subfamily.</text>
</comment>
<comment type="sequence caution" evidence="2">
    <conflict type="erroneous initiation">
        <sequence resource="EMBL-CDS" id="ABG71839"/>
    </conflict>
</comment>
<sequence>MSEFIAENRGANAITRPNWSAVFSVAFCVACLIIVEFLPVSLLTPMAQDLGISEGVAGQSVTVTAFVAMFASLFITQTIQATDRRYVVILFAVLLTLSCLLVSFANSFSLLLIGRACLGVALGGFWAISASLTMRLVPPRTVPKALSVIFGAVSIALVIAAPLGSFLGELIGWRNVFNAAAAMGVLCIFWIIKSLPSLPGEPSHQKQNTFRLLQRPGVMAGMIAIFMSFAGQFAFFTYIRPVYMNLAGFGVDGLTLVLLSFGIASFVGTSLSSFILKRSVKLALAGAPFVLALSALVLTLWGSDKIVATGVAIIWGLTFALIPVGWSTWITRSLADQAEKAGSIQVAVIQLANTCGAAIGGYALDNIGLTSPLMLSGTLMLLTALLVTAKVKMKKS</sequence>
<name>NEPI_ECOL5</name>
<dbReference type="EMBL" id="CP000247">
    <property type="protein sequence ID" value="ABG71839.1"/>
    <property type="status" value="ALT_INIT"/>
    <property type="molecule type" value="Genomic_DNA"/>
</dbReference>
<dbReference type="RefSeq" id="WP_011579286.1">
    <property type="nucleotide sequence ID" value="NC_008253.1"/>
</dbReference>
<dbReference type="SMR" id="Q0TB40"/>
<dbReference type="KEGG" id="ecp:ECP_3868"/>
<dbReference type="HOGENOM" id="CLU_001265_61_1_6"/>
<dbReference type="Proteomes" id="UP000009182">
    <property type="component" value="Chromosome"/>
</dbReference>
<dbReference type="GO" id="GO:0005886">
    <property type="term" value="C:plasma membrane"/>
    <property type="evidence" value="ECO:0007669"/>
    <property type="project" value="UniProtKB-SubCell"/>
</dbReference>
<dbReference type="GO" id="GO:0015297">
    <property type="term" value="F:antiporter activity"/>
    <property type="evidence" value="ECO:0007669"/>
    <property type="project" value="UniProtKB-KW"/>
</dbReference>
<dbReference type="GO" id="GO:0015211">
    <property type="term" value="F:purine nucleoside transmembrane transporter activity"/>
    <property type="evidence" value="ECO:0007669"/>
    <property type="project" value="UniProtKB-UniRule"/>
</dbReference>
<dbReference type="CDD" id="cd17324">
    <property type="entry name" value="MFS_NepI_like"/>
    <property type="match status" value="1"/>
</dbReference>
<dbReference type="FunFam" id="1.20.1250.20:FF:000113">
    <property type="entry name" value="Purine ribonucleoside efflux pump NepI"/>
    <property type="match status" value="1"/>
</dbReference>
<dbReference type="Gene3D" id="1.20.1250.20">
    <property type="entry name" value="MFS general substrate transporter like domains"/>
    <property type="match status" value="1"/>
</dbReference>
<dbReference type="HAMAP" id="MF_01189">
    <property type="entry name" value="MFS_NepI"/>
    <property type="match status" value="1"/>
</dbReference>
<dbReference type="InterPro" id="IPR011701">
    <property type="entry name" value="MFS"/>
</dbReference>
<dbReference type="InterPro" id="IPR020846">
    <property type="entry name" value="MFS_dom"/>
</dbReference>
<dbReference type="InterPro" id="IPR050189">
    <property type="entry name" value="MFS_Efflux_Transporters"/>
</dbReference>
<dbReference type="InterPro" id="IPR023680">
    <property type="entry name" value="MFS_NepI"/>
</dbReference>
<dbReference type="InterPro" id="IPR036259">
    <property type="entry name" value="MFS_trans_sf"/>
</dbReference>
<dbReference type="NCBIfam" id="NF007578">
    <property type="entry name" value="PRK10213.1"/>
    <property type="match status" value="1"/>
</dbReference>
<dbReference type="PANTHER" id="PTHR43124">
    <property type="entry name" value="PURINE EFFLUX PUMP PBUE"/>
    <property type="match status" value="1"/>
</dbReference>
<dbReference type="PANTHER" id="PTHR43124:SF5">
    <property type="entry name" value="PURINE RIBONUCLEOSIDE EFFLUX PUMP NEPI"/>
    <property type="match status" value="1"/>
</dbReference>
<dbReference type="Pfam" id="PF07690">
    <property type="entry name" value="MFS_1"/>
    <property type="match status" value="1"/>
</dbReference>
<dbReference type="SUPFAM" id="SSF103473">
    <property type="entry name" value="MFS general substrate transporter"/>
    <property type="match status" value="1"/>
</dbReference>
<dbReference type="PROSITE" id="PS50850">
    <property type="entry name" value="MFS"/>
    <property type="match status" value="1"/>
</dbReference>
<protein>
    <recommendedName>
        <fullName evidence="1">Purine ribonucleoside efflux pump NepI</fullName>
    </recommendedName>
</protein>
<reference key="1">
    <citation type="journal article" date="2006" name="Mol. Microbiol.">
        <title>Role of pathogenicity island-associated integrases in the genome plasticity of uropathogenic Escherichia coli strain 536.</title>
        <authorList>
            <person name="Hochhut B."/>
            <person name="Wilde C."/>
            <person name="Balling G."/>
            <person name="Middendorf B."/>
            <person name="Dobrindt U."/>
            <person name="Brzuszkiewicz E."/>
            <person name="Gottschalk G."/>
            <person name="Carniel E."/>
            <person name="Hacker J."/>
        </authorList>
    </citation>
    <scope>NUCLEOTIDE SEQUENCE [LARGE SCALE GENOMIC DNA]</scope>
    <source>
        <strain>536 / UPEC</strain>
    </source>
</reference>